<accession>P62540</accession>
<accession>P82086</accession>
<dbReference type="GO" id="GO:0005576">
    <property type="term" value="C:extracellular region"/>
    <property type="evidence" value="ECO:0007669"/>
    <property type="project" value="UniProtKB-SubCell"/>
</dbReference>
<dbReference type="GO" id="GO:0006952">
    <property type="term" value="P:defense response"/>
    <property type="evidence" value="ECO:0007669"/>
    <property type="project" value="UniProtKB-KW"/>
</dbReference>
<dbReference type="GO" id="GO:0008217">
    <property type="term" value="P:regulation of blood pressure"/>
    <property type="evidence" value="ECO:0007669"/>
    <property type="project" value="UniProtKB-KW"/>
</dbReference>
<protein>
    <recommendedName>
        <fullName>Caerulein-1.2/1.2Y4</fullName>
    </recommendedName>
</protein>
<comment type="function">
    <text evidence="2">Hypotensive neuropeptide.</text>
</comment>
<comment type="subcellular location">
    <subcellularLocation>
        <location>Secreted</location>
    </subcellularLocation>
</comment>
<comment type="tissue specificity">
    <text>Expressed by the skin dorsal glands.</text>
</comment>
<comment type="PTM">
    <text evidence="1">Isoform 1.2Y4 differs from isoform 1.2 in not being sulfated.</text>
</comment>
<comment type="mass spectrometry" mass="1366.0" method="Electrospray" evidence="1">
    <text>Isoform caerulein-1.2.</text>
</comment>
<comment type="mass spectrometry" mass="1286.0" method="Electrospray" evidence="1">
    <text>Isoform caerulein-1.2Y4.</text>
</comment>
<comment type="similarity">
    <text evidence="2">Belongs to the gastrin/cholecystokinin family.</text>
</comment>
<name>CAE12_RANCI</name>
<reference key="1">
    <citation type="journal article" date="1999" name="Rapid Commun. Mass Spectrom.">
        <title>Caerulein-like peptides from the skin glands of the Australian blue mountains tree frog Litoria citropa. Part 1. Sequence determination using electrospray mass spectrometry.</title>
        <authorList>
            <person name="Wabnitz P.A."/>
            <person name="Bowie J.H."/>
            <person name="Tyler M.J."/>
        </authorList>
    </citation>
    <scope>PROTEIN SEQUENCE</scope>
    <scope>PYROGLUTAMATE FORMATION AT GLN-1</scope>
    <scope>SULFATION AT TYR-4</scope>
    <scope>AMIDATION AT PHE-10</scope>
    <scope>MASS SPECTROMETRY</scope>
    <source>
        <tissue>Skin secretion</tissue>
    </source>
</reference>
<keyword id="KW-0027">Amidation</keyword>
<keyword id="KW-0878">Amphibian defense peptide</keyword>
<keyword id="KW-0903">Direct protein sequencing</keyword>
<keyword id="KW-0382">Hypotensive agent</keyword>
<keyword id="KW-0873">Pyrrolidone carboxylic acid</keyword>
<keyword id="KW-0964">Secreted</keyword>
<keyword id="KW-0765">Sulfation</keyword>
<organism>
    <name type="scientific">Ranoidea citropa</name>
    <name type="common">Australian Blue Mountains tree frog</name>
    <name type="synonym">Litoria citropa</name>
    <dbReference type="NCBI Taxonomy" id="94770"/>
    <lineage>
        <taxon>Eukaryota</taxon>
        <taxon>Metazoa</taxon>
        <taxon>Chordata</taxon>
        <taxon>Craniata</taxon>
        <taxon>Vertebrata</taxon>
        <taxon>Euteleostomi</taxon>
        <taxon>Amphibia</taxon>
        <taxon>Batrachia</taxon>
        <taxon>Anura</taxon>
        <taxon>Neobatrachia</taxon>
        <taxon>Hyloidea</taxon>
        <taxon>Hylidae</taxon>
        <taxon>Pelodryadinae</taxon>
        <taxon>Ranoidea</taxon>
    </lineage>
</organism>
<sequence length="10" mass="1306">QQDYTGWFDF</sequence>
<feature type="peptide" id="PRO_0000043878" description="Caerulein-1.2/1.2Y4">
    <location>
        <begin position="1"/>
        <end position="10"/>
    </location>
</feature>
<feature type="modified residue" description="Pyrrolidone carboxylic acid" evidence="1">
    <location>
        <position position="1"/>
    </location>
</feature>
<feature type="modified residue" description="Sulfotyrosine; in form caerulein-1.2" evidence="1">
    <location>
        <position position="4"/>
    </location>
</feature>
<feature type="modified residue" description="Phenylalanine amide" evidence="1">
    <location>
        <position position="10"/>
    </location>
</feature>
<evidence type="ECO:0000269" key="1">
    <source>
    </source>
</evidence>
<evidence type="ECO:0000305" key="2"/>
<proteinExistence type="evidence at protein level"/>